<accession>Q8E271</accession>
<proteinExistence type="inferred from homology"/>
<comment type="catalytic activity">
    <reaction evidence="1">
        <text>2-(N(omega)-L-arginino)succinate = fumarate + L-arginine</text>
        <dbReference type="Rhea" id="RHEA:24020"/>
        <dbReference type="ChEBI" id="CHEBI:29806"/>
        <dbReference type="ChEBI" id="CHEBI:32682"/>
        <dbReference type="ChEBI" id="CHEBI:57472"/>
        <dbReference type="EC" id="4.3.2.1"/>
    </reaction>
</comment>
<comment type="pathway">
    <text evidence="1">Amino-acid biosynthesis; L-arginine biosynthesis; L-arginine from L-ornithine and carbamoyl phosphate: step 3/3.</text>
</comment>
<comment type="subcellular location">
    <subcellularLocation>
        <location evidence="1">Cytoplasm</location>
    </subcellularLocation>
</comment>
<comment type="similarity">
    <text evidence="1">Belongs to the lyase 1 family. Argininosuccinate lyase subfamily.</text>
</comment>
<keyword id="KW-0028">Amino-acid biosynthesis</keyword>
<keyword id="KW-0055">Arginine biosynthesis</keyword>
<keyword id="KW-0963">Cytoplasm</keyword>
<keyword id="KW-0456">Lyase</keyword>
<keyword id="KW-1185">Reference proteome</keyword>
<gene>
    <name evidence="1" type="primary">argH</name>
    <name type="ordered locus">SAG0126</name>
</gene>
<protein>
    <recommendedName>
        <fullName evidence="1">Argininosuccinate lyase</fullName>
        <shortName evidence="1">ASAL</shortName>
        <ecNumber evidence="1">4.3.2.1</ecNumber>
    </recommendedName>
    <alternativeName>
        <fullName evidence="1">Arginosuccinase</fullName>
    </alternativeName>
</protein>
<organism>
    <name type="scientific">Streptococcus agalactiae serotype V (strain ATCC BAA-611 / 2603 V/R)</name>
    <dbReference type="NCBI Taxonomy" id="208435"/>
    <lineage>
        <taxon>Bacteria</taxon>
        <taxon>Bacillati</taxon>
        <taxon>Bacillota</taxon>
        <taxon>Bacilli</taxon>
        <taxon>Lactobacillales</taxon>
        <taxon>Streptococcaceae</taxon>
        <taxon>Streptococcus</taxon>
    </lineage>
</organism>
<sequence length="462" mass="52543">MTKNHKLWGGRFESSLEKWVEEFGASISFDQKLAPYDMKASMAHVTMLGKTDIISQEEAGLIKDGLKILQDKYRAGQLTFSISNEDIHMNIESLLTAEIGEVAGKLHTARSRNDQVATDMHLYLKDKLQEMMKKLLHLRTTLVNLAENHIYTVMPGYTHLQHAQPISFGHHLMAYYNMFTRDTERLEFNMKHTNLSPLGAAALAGTTFPIDRHMTTRLLDFEKPYSNSLDAVSDRDFIIEFLSNASILMMHLSRFCEEIINWCSYEYQFITLSDTFSTGSSIMPQKKNPDMAELIRGKTGRVYGNLFSLLTVMKSLPLAYNKDLQEDKEGMFDSVETVSIAIEIMANMLETMTVNEHIMMTSTETDFSNATELADYLASKGVPFRKAHEIVGKLVLECSKNGSYLQDIPLKYYQEISELIENDIYEILTAKTAVKRRNSLGGTGFDQVKKQILLARKELKAE</sequence>
<dbReference type="EC" id="4.3.2.1" evidence="1"/>
<dbReference type="EMBL" id="AE009948">
    <property type="protein sequence ID" value="AAM99034.1"/>
    <property type="molecule type" value="Genomic_DNA"/>
</dbReference>
<dbReference type="RefSeq" id="NP_687162.1">
    <property type="nucleotide sequence ID" value="NC_004116.1"/>
</dbReference>
<dbReference type="RefSeq" id="WP_000164582.1">
    <property type="nucleotide sequence ID" value="NC_004116.1"/>
</dbReference>
<dbReference type="SMR" id="Q8E271"/>
<dbReference type="STRING" id="208435.SAG0126"/>
<dbReference type="KEGG" id="sag:SAG0126"/>
<dbReference type="PATRIC" id="fig|208435.3.peg.124"/>
<dbReference type="HOGENOM" id="CLU_027272_2_3_9"/>
<dbReference type="OrthoDB" id="9769623at2"/>
<dbReference type="UniPathway" id="UPA00068">
    <property type="reaction ID" value="UER00114"/>
</dbReference>
<dbReference type="Proteomes" id="UP000000821">
    <property type="component" value="Chromosome"/>
</dbReference>
<dbReference type="GO" id="GO:0005829">
    <property type="term" value="C:cytosol"/>
    <property type="evidence" value="ECO:0007669"/>
    <property type="project" value="TreeGrafter"/>
</dbReference>
<dbReference type="GO" id="GO:0004056">
    <property type="term" value="F:argininosuccinate lyase activity"/>
    <property type="evidence" value="ECO:0007669"/>
    <property type="project" value="UniProtKB-UniRule"/>
</dbReference>
<dbReference type="GO" id="GO:0042450">
    <property type="term" value="P:arginine biosynthetic process via ornithine"/>
    <property type="evidence" value="ECO:0007669"/>
    <property type="project" value="InterPro"/>
</dbReference>
<dbReference type="GO" id="GO:0006526">
    <property type="term" value="P:L-arginine biosynthetic process"/>
    <property type="evidence" value="ECO:0007669"/>
    <property type="project" value="UniProtKB-UniRule"/>
</dbReference>
<dbReference type="CDD" id="cd01359">
    <property type="entry name" value="Argininosuccinate_lyase"/>
    <property type="match status" value="1"/>
</dbReference>
<dbReference type="FunFam" id="1.10.275.10:FF:000002">
    <property type="entry name" value="Argininosuccinate lyase"/>
    <property type="match status" value="1"/>
</dbReference>
<dbReference type="FunFam" id="1.10.40.30:FF:000001">
    <property type="entry name" value="Argininosuccinate lyase"/>
    <property type="match status" value="1"/>
</dbReference>
<dbReference type="FunFam" id="1.20.200.10:FF:000002">
    <property type="entry name" value="Argininosuccinate lyase"/>
    <property type="match status" value="1"/>
</dbReference>
<dbReference type="Gene3D" id="1.10.40.30">
    <property type="entry name" value="Fumarase/aspartase (C-terminal domain)"/>
    <property type="match status" value="1"/>
</dbReference>
<dbReference type="Gene3D" id="1.20.200.10">
    <property type="entry name" value="Fumarase/aspartase (Central domain)"/>
    <property type="match status" value="1"/>
</dbReference>
<dbReference type="Gene3D" id="1.10.275.10">
    <property type="entry name" value="Fumarase/aspartase (N-terminal domain)"/>
    <property type="match status" value="1"/>
</dbReference>
<dbReference type="HAMAP" id="MF_00006">
    <property type="entry name" value="Arg_succ_lyase"/>
    <property type="match status" value="1"/>
</dbReference>
<dbReference type="InterPro" id="IPR029419">
    <property type="entry name" value="Arg_succ_lyase_C"/>
</dbReference>
<dbReference type="InterPro" id="IPR009049">
    <property type="entry name" value="Argininosuccinate_lyase"/>
</dbReference>
<dbReference type="InterPro" id="IPR024083">
    <property type="entry name" value="Fumarase/histidase_N"/>
</dbReference>
<dbReference type="InterPro" id="IPR020557">
    <property type="entry name" value="Fumarate_lyase_CS"/>
</dbReference>
<dbReference type="InterPro" id="IPR000362">
    <property type="entry name" value="Fumarate_lyase_fam"/>
</dbReference>
<dbReference type="InterPro" id="IPR022761">
    <property type="entry name" value="Fumarate_lyase_N"/>
</dbReference>
<dbReference type="InterPro" id="IPR008948">
    <property type="entry name" value="L-Aspartase-like"/>
</dbReference>
<dbReference type="NCBIfam" id="TIGR00838">
    <property type="entry name" value="argH"/>
    <property type="match status" value="1"/>
</dbReference>
<dbReference type="PANTHER" id="PTHR43814">
    <property type="entry name" value="ARGININOSUCCINATE LYASE"/>
    <property type="match status" value="1"/>
</dbReference>
<dbReference type="PANTHER" id="PTHR43814:SF1">
    <property type="entry name" value="ARGININOSUCCINATE LYASE"/>
    <property type="match status" value="1"/>
</dbReference>
<dbReference type="Pfam" id="PF14698">
    <property type="entry name" value="ASL_C2"/>
    <property type="match status" value="1"/>
</dbReference>
<dbReference type="Pfam" id="PF00206">
    <property type="entry name" value="Lyase_1"/>
    <property type="match status" value="1"/>
</dbReference>
<dbReference type="PRINTS" id="PR00145">
    <property type="entry name" value="ARGSUCLYASE"/>
</dbReference>
<dbReference type="PRINTS" id="PR00149">
    <property type="entry name" value="FUMRATELYASE"/>
</dbReference>
<dbReference type="SUPFAM" id="SSF48557">
    <property type="entry name" value="L-aspartase-like"/>
    <property type="match status" value="1"/>
</dbReference>
<dbReference type="PROSITE" id="PS00163">
    <property type="entry name" value="FUMARATE_LYASES"/>
    <property type="match status" value="1"/>
</dbReference>
<name>ARLY_STRA5</name>
<evidence type="ECO:0000255" key="1">
    <source>
        <dbReference type="HAMAP-Rule" id="MF_00006"/>
    </source>
</evidence>
<reference key="1">
    <citation type="journal article" date="2002" name="Proc. Natl. Acad. Sci. U.S.A.">
        <title>Complete genome sequence and comparative genomic analysis of an emerging human pathogen, serotype V Streptococcus agalactiae.</title>
        <authorList>
            <person name="Tettelin H."/>
            <person name="Masignani V."/>
            <person name="Cieslewicz M.J."/>
            <person name="Eisen J.A."/>
            <person name="Peterson S.N."/>
            <person name="Wessels M.R."/>
            <person name="Paulsen I.T."/>
            <person name="Nelson K.E."/>
            <person name="Margarit I."/>
            <person name="Read T.D."/>
            <person name="Madoff L.C."/>
            <person name="Wolf A.M."/>
            <person name="Beanan M.J."/>
            <person name="Brinkac L.M."/>
            <person name="Daugherty S.C."/>
            <person name="DeBoy R.T."/>
            <person name="Durkin A.S."/>
            <person name="Kolonay J.F."/>
            <person name="Madupu R."/>
            <person name="Lewis M.R."/>
            <person name="Radune D."/>
            <person name="Fedorova N.B."/>
            <person name="Scanlan D."/>
            <person name="Khouri H.M."/>
            <person name="Mulligan S."/>
            <person name="Carty H.A."/>
            <person name="Cline R.T."/>
            <person name="Van Aken S.E."/>
            <person name="Gill J."/>
            <person name="Scarselli M."/>
            <person name="Mora M."/>
            <person name="Iacobini E.T."/>
            <person name="Brettoni C."/>
            <person name="Galli G."/>
            <person name="Mariani M."/>
            <person name="Vegni F."/>
            <person name="Maione D."/>
            <person name="Rinaudo D."/>
            <person name="Rappuoli R."/>
            <person name="Telford J.L."/>
            <person name="Kasper D.L."/>
            <person name="Grandi G."/>
            <person name="Fraser C.M."/>
        </authorList>
    </citation>
    <scope>NUCLEOTIDE SEQUENCE [LARGE SCALE GENOMIC DNA]</scope>
    <source>
        <strain>ATCC BAA-611 / 2603 V/R</strain>
    </source>
</reference>
<feature type="chain" id="PRO_0000137830" description="Argininosuccinate lyase">
    <location>
        <begin position="1"/>
        <end position="462"/>
    </location>
</feature>